<keyword id="KW-0963">Cytoplasm</keyword>
<keyword id="KW-0620">Polyamine biosynthesis</keyword>
<keyword id="KW-1185">Reference proteome</keyword>
<keyword id="KW-0745">Spermidine biosynthesis</keyword>
<keyword id="KW-0808">Transferase</keyword>
<accession>B2FKR1</accession>
<sequence>MTDSNNWYIEHFERTGSAIGYRITGKLDEVQSPFQKIEIFQTTDWGNLMTIDGAIMLTSKDNFFYHEMISHPVLFTHAAPKRVVIIGGGDCGTLREVLKHTGVESVTQCDIDEQVTVMARKHFPELCDSNDDARAELLFDDGVAYMANCPAGSVDVVIVDSTDPVGPGEGLFNKAFYESCFKALKDDGILVQQSESPLMQLELINEMRAEMGKAGFGSFKTLPFPQPCYPTGWWSVTMARKGDSSFDFRQADSAAKTFNTLYYTAALHTGVLVTPPFVQAALK</sequence>
<protein>
    <recommendedName>
        <fullName evidence="1">Polyamine aminopropyltransferase</fullName>
    </recommendedName>
    <alternativeName>
        <fullName evidence="1">Putrescine aminopropyltransferase</fullName>
        <shortName evidence="1">PAPT</shortName>
    </alternativeName>
    <alternativeName>
        <fullName evidence="1">Spermidine synthase</fullName>
        <shortName evidence="1">SPDS</shortName>
        <shortName evidence="1">SPDSY</shortName>
        <ecNumber evidence="1">2.5.1.16</ecNumber>
    </alternativeName>
</protein>
<name>SPEE_STRMK</name>
<dbReference type="EC" id="2.5.1.16" evidence="1"/>
<dbReference type="EMBL" id="AM743169">
    <property type="protein sequence ID" value="CAQ47744.1"/>
    <property type="molecule type" value="Genomic_DNA"/>
</dbReference>
<dbReference type="RefSeq" id="WP_005414731.1">
    <property type="nucleotide sequence ID" value="NC_010943.1"/>
</dbReference>
<dbReference type="SMR" id="B2FKR1"/>
<dbReference type="EnsemblBacteria" id="CAQ47744">
    <property type="protein sequence ID" value="CAQ47744"/>
    <property type="gene ID" value="Smlt4365"/>
</dbReference>
<dbReference type="KEGG" id="sml:Smlt4365"/>
<dbReference type="eggNOG" id="COG0421">
    <property type="taxonomic scope" value="Bacteria"/>
</dbReference>
<dbReference type="HOGENOM" id="CLU_048199_0_0_6"/>
<dbReference type="UniPathway" id="UPA00248">
    <property type="reaction ID" value="UER00314"/>
</dbReference>
<dbReference type="Proteomes" id="UP000008840">
    <property type="component" value="Chromosome"/>
</dbReference>
<dbReference type="GO" id="GO:0005829">
    <property type="term" value="C:cytosol"/>
    <property type="evidence" value="ECO:0007669"/>
    <property type="project" value="TreeGrafter"/>
</dbReference>
<dbReference type="GO" id="GO:0004766">
    <property type="term" value="F:spermidine synthase activity"/>
    <property type="evidence" value="ECO:0007669"/>
    <property type="project" value="UniProtKB-UniRule"/>
</dbReference>
<dbReference type="GO" id="GO:0008295">
    <property type="term" value="P:spermidine biosynthetic process"/>
    <property type="evidence" value="ECO:0007669"/>
    <property type="project" value="UniProtKB-UniRule"/>
</dbReference>
<dbReference type="CDD" id="cd02440">
    <property type="entry name" value="AdoMet_MTases"/>
    <property type="match status" value="1"/>
</dbReference>
<dbReference type="Gene3D" id="2.30.140.10">
    <property type="entry name" value="Spermidine synthase, tetramerisation domain"/>
    <property type="match status" value="1"/>
</dbReference>
<dbReference type="Gene3D" id="3.40.50.150">
    <property type="entry name" value="Vaccinia Virus protein VP39"/>
    <property type="match status" value="1"/>
</dbReference>
<dbReference type="HAMAP" id="MF_00198">
    <property type="entry name" value="Spermidine_synth"/>
    <property type="match status" value="1"/>
</dbReference>
<dbReference type="InterPro" id="IPR030374">
    <property type="entry name" value="PABS"/>
</dbReference>
<dbReference type="InterPro" id="IPR030373">
    <property type="entry name" value="PABS_CS"/>
</dbReference>
<dbReference type="InterPro" id="IPR029063">
    <property type="entry name" value="SAM-dependent_MTases_sf"/>
</dbReference>
<dbReference type="InterPro" id="IPR001045">
    <property type="entry name" value="Spermi_synthase"/>
</dbReference>
<dbReference type="InterPro" id="IPR035246">
    <property type="entry name" value="Spermidine_synt_N"/>
</dbReference>
<dbReference type="InterPro" id="IPR037163">
    <property type="entry name" value="Spermidine_synt_N_sf"/>
</dbReference>
<dbReference type="NCBIfam" id="NF002010">
    <property type="entry name" value="PRK00811.1"/>
    <property type="match status" value="1"/>
</dbReference>
<dbReference type="NCBIfam" id="TIGR00417">
    <property type="entry name" value="speE"/>
    <property type="match status" value="1"/>
</dbReference>
<dbReference type="PANTHER" id="PTHR11558:SF11">
    <property type="entry name" value="SPERMIDINE SYNTHASE"/>
    <property type="match status" value="1"/>
</dbReference>
<dbReference type="PANTHER" id="PTHR11558">
    <property type="entry name" value="SPERMIDINE/SPERMINE SYNTHASE"/>
    <property type="match status" value="1"/>
</dbReference>
<dbReference type="Pfam" id="PF17284">
    <property type="entry name" value="Spermine_synt_N"/>
    <property type="match status" value="1"/>
</dbReference>
<dbReference type="Pfam" id="PF01564">
    <property type="entry name" value="Spermine_synth"/>
    <property type="match status" value="1"/>
</dbReference>
<dbReference type="SUPFAM" id="SSF53335">
    <property type="entry name" value="S-adenosyl-L-methionine-dependent methyltransferases"/>
    <property type="match status" value="1"/>
</dbReference>
<dbReference type="PROSITE" id="PS01330">
    <property type="entry name" value="PABS_1"/>
    <property type="match status" value="1"/>
</dbReference>
<dbReference type="PROSITE" id="PS51006">
    <property type="entry name" value="PABS_2"/>
    <property type="match status" value="1"/>
</dbReference>
<organism>
    <name type="scientific">Stenotrophomonas maltophilia (strain K279a)</name>
    <dbReference type="NCBI Taxonomy" id="522373"/>
    <lineage>
        <taxon>Bacteria</taxon>
        <taxon>Pseudomonadati</taxon>
        <taxon>Pseudomonadota</taxon>
        <taxon>Gammaproteobacteria</taxon>
        <taxon>Lysobacterales</taxon>
        <taxon>Lysobacteraceae</taxon>
        <taxon>Stenotrophomonas</taxon>
        <taxon>Stenotrophomonas maltophilia group</taxon>
    </lineage>
</organism>
<reference key="1">
    <citation type="journal article" date="2008" name="Genome Biol.">
        <title>The complete genome, comparative and functional analysis of Stenotrophomonas maltophilia reveals an organism heavily shielded by drug resistance determinants.</title>
        <authorList>
            <person name="Crossman L.C."/>
            <person name="Gould V.C."/>
            <person name="Dow J.M."/>
            <person name="Vernikos G.S."/>
            <person name="Okazaki A."/>
            <person name="Sebaihia M."/>
            <person name="Saunders D."/>
            <person name="Arrowsmith C."/>
            <person name="Carver T."/>
            <person name="Peters N."/>
            <person name="Adlem E."/>
            <person name="Kerhornou A."/>
            <person name="Lord A."/>
            <person name="Murphy L."/>
            <person name="Seeger K."/>
            <person name="Squares R."/>
            <person name="Rutter S."/>
            <person name="Quail M.A."/>
            <person name="Rajandream M.A."/>
            <person name="Harris D."/>
            <person name="Churcher C."/>
            <person name="Bentley S.D."/>
            <person name="Parkhill J."/>
            <person name="Thomson N.R."/>
            <person name="Avison M.B."/>
        </authorList>
    </citation>
    <scope>NUCLEOTIDE SEQUENCE [LARGE SCALE GENOMIC DNA]</scope>
    <source>
        <strain>K279a</strain>
    </source>
</reference>
<proteinExistence type="inferred from homology"/>
<gene>
    <name evidence="1" type="primary">speE</name>
    <name type="ordered locus">Smlt4365</name>
</gene>
<comment type="function">
    <text evidence="1">Catalyzes the irreversible transfer of a propylamine group from the amino donor S-adenosylmethioninamine (decarboxy-AdoMet) to putrescine (1,4-diaminobutane) to yield spermidine.</text>
</comment>
<comment type="catalytic activity">
    <reaction evidence="1">
        <text>S-adenosyl 3-(methylsulfanyl)propylamine + putrescine = S-methyl-5'-thioadenosine + spermidine + H(+)</text>
        <dbReference type="Rhea" id="RHEA:12721"/>
        <dbReference type="ChEBI" id="CHEBI:15378"/>
        <dbReference type="ChEBI" id="CHEBI:17509"/>
        <dbReference type="ChEBI" id="CHEBI:57443"/>
        <dbReference type="ChEBI" id="CHEBI:57834"/>
        <dbReference type="ChEBI" id="CHEBI:326268"/>
        <dbReference type="EC" id="2.5.1.16"/>
    </reaction>
</comment>
<comment type="pathway">
    <text evidence="1">Amine and polyamine biosynthesis; spermidine biosynthesis; spermidine from putrescine: step 1/1.</text>
</comment>
<comment type="subunit">
    <text evidence="1">Homodimer or homotetramer.</text>
</comment>
<comment type="subcellular location">
    <subcellularLocation>
        <location evidence="1">Cytoplasm</location>
    </subcellularLocation>
</comment>
<comment type="similarity">
    <text evidence="1">Belongs to the spermidine/spermine synthase family.</text>
</comment>
<feature type="chain" id="PRO_1000099303" description="Polyamine aminopropyltransferase">
    <location>
        <begin position="1"/>
        <end position="283"/>
    </location>
</feature>
<feature type="domain" description="PABS" evidence="1">
    <location>
        <begin position="5"/>
        <end position="241"/>
    </location>
</feature>
<feature type="active site" description="Proton acceptor" evidence="1">
    <location>
        <position position="160"/>
    </location>
</feature>
<feature type="binding site" evidence="1">
    <location>
        <position position="35"/>
    </location>
    <ligand>
        <name>S-methyl-5'-thioadenosine</name>
        <dbReference type="ChEBI" id="CHEBI:17509"/>
    </ligand>
</feature>
<feature type="binding site" evidence="1">
    <location>
        <position position="66"/>
    </location>
    <ligand>
        <name>spermidine</name>
        <dbReference type="ChEBI" id="CHEBI:57834"/>
    </ligand>
</feature>
<feature type="binding site" evidence="1">
    <location>
        <position position="90"/>
    </location>
    <ligand>
        <name>spermidine</name>
        <dbReference type="ChEBI" id="CHEBI:57834"/>
    </ligand>
</feature>
<feature type="binding site" evidence="1">
    <location>
        <position position="110"/>
    </location>
    <ligand>
        <name>S-methyl-5'-thioadenosine</name>
        <dbReference type="ChEBI" id="CHEBI:17509"/>
    </ligand>
</feature>
<feature type="binding site" evidence="1">
    <location>
        <begin position="141"/>
        <end position="142"/>
    </location>
    <ligand>
        <name>S-methyl-5'-thioadenosine</name>
        <dbReference type="ChEBI" id="CHEBI:17509"/>
    </ligand>
</feature>
<feature type="binding site" evidence="1">
    <location>
        <begin position="160"/>
        <end position="163"/>
    </location>
    <ligand>
        <name>spermidine</name>
        <dbReference type="ChEBI" id="CHEBI:57834"/>
    </ligand>
</feature>
<feature type="binding site" evidence="1">
    <location>
        <position position="167"/>
    </location>
    <ligand>
        <name>S-methyl-5'-thioadenosine</name>
        <dbReference type="ChEBI" id="CHEBI:17509"/>
    </ligand>
</feature>
<evidence type="ECO:0000255" key="1">
    <source>
        <dbReference type="HAMAP-Rule" id="MF_00198"/>
    </source>
</evidence>